<evidence type="ECO:0000255" key="1">
    <source>
        <dbReference type="HAMAP-Rule" id="MF_00687"/>
    </source>
</evidence>
<protein>
    <recommendedName>
        <fullName evidence="1">4-deoxy-L-threo-5-hexosulose-uronate ketol-isomerase</fullName>
        <ecNumber evidence="1">5.3.1.17</ecNumber>
    </recommendedName>
    <alternativeName>
        <fullName evidence="1">5-keto-4-deoxyuronate isomerase</fullName>
    </alternativeName>
    <alternativeName>
        <fullName evidence="1">DKI isomerase</fullName>
    </alternativeName>
</protein>
<name>KDUI_YERPY</name>
<dbReference type="EC" id="5.3.1.17" evidence="1"/>
<dbReference type="EMBL" id="CP000950">
    <property type="protein sequence ID" value="ACA68095.1"/>
    <property type="molecule type" value="Genomic_DNA"/>
</dbReference>
<dbReference type="RefSeq" id="WP_012105015.1">
    <property type="nucleotide sequence ID" value="NZ_CP009792.1"/>
</dbReference>
<dbReference type="SMR" id="B1JJ01"/>
<dbReference type="KEGG" id="ypy:YPK_1804"/>
<dbReference type="PATRIC" id="fig|502800.11.peg.2470"/>
<dbReference type="UniPathway" id="UPA00545">
    <property type="reaction ID" value="UER00826"/>
</dbReference>
<dbReference type="GO" id="GO:0008697">
    <property type="term" value="F:4-deoxy-L-threo-5-hexosulose-uronate ketol-isomerase activity"/>
    <property type="evidence" value="ECO:0007669"/>
    <property type="project" value="UniProtKB-UniRule"/>
</dbReference>
<dbReference type="GO" id="GO:0008270">
    <property type="term" value="F:zinc ion binding"/>
    <property type="evidence" value="ECO:0007669"/>
    <property type="project" value="UniProtKB-UniRule"/>
</dbReference>
<dbReference type="GO" id="GO:0019698">
    <property type="term" value="P:D-galacturonate catabolic process"/>
    <property type="evidence" value="ECO:0007669"/>
    <property type="project" value="TreeGrafter"/>
</dbReference>
<dbReference type="GO" id="GO:0042840">
    <property type="term" value="P:D-glucuronate catabolic process"/>
    <property type="evidence" value="ECO:0007669"/>
    <property type="project" value="TreeGrafter"/>
</dbReference>
<dbReference type="GO" id="GO:0045490">
    <property type="term" value="P:pectin catabolic process"/>
    <property type="evidence" value="ECO:0007669"/>
    <property type="project" value="UniProtKB-UniRule"/>
</dbReference>
<dbReference type="CDD" id="cd20491">
    <property type="entry name" value="cupin_KduI_C"/>
    <property type="match status" value="1"/>
</dbReference>
<dbReference type="CDD" id="cd20294">
    <property type="entry name" value="cupin_KduI_N"/>
    <property type="match status" value="1"/>
</dbReference>
<dbReference type="FunFam" id="2.60.120.10:FF:000018">
    <property type="entry name" value="4-deoxy-L-threo-5-hexosulose-uronate ketol-isomerase"/>
    <property type="match status" value="1"/>
</dbReference>
<dbReference type="FunFam" id="2.60.120.520:FF:000001">
    <property type="entry name" value="4-deoxy-L-threo-5-hexosulose-uronate ketol-isomerase"/>
    <property type="match status" value="1"/>
</dbReference>
<dbReference type="Gene3D" id="2.60.120.10">
    <property type="entry name" value="Jelly Rolls"/>
    <property type="match status" value="1"/>
</dbReference>
<dbReference type="Gene3D" id="2.60.120.520">
    <property type="entry name" value="pectin degrading enzyme 5-keto 4- deoxyuronate isomerase, domain 1"/>
    <property type="match status" value="1"/>
</dbReference>
<dbReference type="HAMAP" id="MF_00687">
    <property type="entry name" value="KduI"/>
    <property type="match status" value="1"/>
</dbReference>
<dbReference type="InterPro" id="IPR007045">
    <property type="entry name" value="KduI"/>
</dbReference>
<dbReference type="InterPro" id="IPR021120">
    <property type="entry name" value="KduI/IolB_isomerase"/>
</dbReference>
<dbReference type="InterPro" id="IPR027449">
    <property type="entry name" value="KduI_N"/>
</dbReference>
<dbReference type="InterPro" id="IPR014710">
    <property type="entry name" value="RmlC-like_jellyroll"/>
</dbReference>
<dbReference type="InterPro" id="IPR011051">
    <property type="entry name" value="RmlC_Cupin_sf"/>
</dbReference>
<dbReference type="NCBIfam" id="NF002091">
    <property type="entry name" value="PRK00924.1"/>
    <property type="match status" value="1"/>
</dbReference>
<dbReference type="PANTHER" id="PTHR38461">
    <property type="entry name" value="4-DEOXY-L-THREO-5-HEXOSULOSE-URONATE KETOL-ISOMERASE"/>
    <property type="match status" value="1"/>
</dbReference>
<dbReference type="PANTHER" id="PTHR38461:SF1">
    <property type="entry name" value="4-DEOXY-L-THREO-5-HEXOSULOSE-URONATE KETOL-ISOMERASE"/>
    <property type="match status" value="1"/>
</dbReference>
<dbReference type="Pfam" id="PF04962">
    <property type="entry name" value="KduI"/>
    <property type="match status" value="1"/>
</dbReference>
<dbReference type="PIRSF" id="PIRSF006625">
    <property type="entry name" value="KduI"/>
    <property type="match status" value="1"/>
</dbReference>
<dbReference type="SUPFAM" id="SSF51182">
    <property type="entry name" value="RmlC-like cupins"/>
    <property type="match status" value="1"/>
</dbReference>
<proteinExistence type="inferred from homology"/>
<comment type="function">
    <text evidence="1">Catalyzes the isomerization of 5-dehydro-4-deoxy-D-glucuronate to 3-deoxy-D-glycero-2,5-hexodiulosonate.</text>
</comment>
<comment type="catalytic activity">
    <reaction evidence="1">
        <text>5-dehydro-4-deoxy-D-glucuronate = 3-deoxy-D-glycero-2,5-hexodiulosonate</text>
        <dbReference type="Rhea" id="RHEA:23896"/>
        <dbReference type="ChEBI" id="CHEBI:17117"/>
        <dbReference type="ChEBI" id="CHEBI:29071"/>
        <dbReference type="EC" id="5.3.1.17"/>
    </reaction>
</comment>
<comment type="cofactor">
    <cofactor evidence="1">
        <name>Zn(2+)</name>
        <dbReference type="ChEBI" id="CHEBI:29105"/>
    </cofactor>
    <text evidence="1">Binds 1 zinc ion per subunit.</text>
</comment>
<comment type="pathway">
    <text evidence="1">Glycan metabolism; pectin degradation; 2-dehydro-3-deoxy-D-gluconate from pectin: step 4/5.</text>
</comment>
<comment type="similarity">
    <text evidence="1">Belongs to the KduI family.</text>
</comment>
<accession>B1JJ01</accession>
<feature type="chain" id="PRO_1000131900" description="4-deoxy-L-threo-5-hexosulose-uronate ketol-isomerase">
    <location>
        <begin position="1"/>
        <end position="278"/>
    </location>
</feature>
<feature type="binding site" evidence="1">
    <location>
        <position position="196"/>
    </location>
    <ligand>
        <name>Zn(2+)</name>
        <dbReference type="ChEBI" id="CHEBI:29105"/>
    </ligand>
</feature>
<feature type="binding site" evidence="1">
    <location>
        <position position="198"/>
    </location>
    <ligand>
        <name>Zn(2+)</name>
        <dbReference type="ChEBI" id="CHEBI:29105"/>
    </ligand>
</feature>
<feature type="binding site" evidence="1">
    <location>
        <position position="203"/>
    </location>
    <ligand>
        <name>Zn(2+)</name>
        <dbReference type="ChEBI" id="CHEBI:29105"/>
    </ligand>
</feature>
<feature type="binding site" evidence="1">
    <location>
        <position position="245"/>
    </location>
    <ligand>
        <name>Zn(2+)</name>
        <dbReference type="ChEBI" id="CHEBI:29105"/>
    </ligand>
</feature>
<gene>
    <name evidence="1" type="primary">kduI</name>
    <name type="ordered locus">YPK_1804</name>
</gene>
<reference key="1">
    <citation type="submission" date="2008-02" db="EMBL/GenBank/DDBJ databases">
        <title>Complete sequence of Yersinia pseudotuberculosis YPIII.</title>
        <authorList>
            <consortium name="US DOE Joint Genome Institute"/>
            <person name="Copeland A."/>
            <person name="Lucas S."/>
            <person name="Lapidus A."/>
            <person name="Glavina del Rio T."/>
            <person name="Dalin E."/>
            <person name="Tice H."/>
            <person name="Bruce D."/>
            <person name="Goodwin L."/>
            <person name="Pitluck S."/>
            <person name="Munk A.C."/>
            <person name="Brettin T."/>
            <person name="Detter J.C."/>
            <person name="Han C."/>
            <person name="Tapia R."/>
            <person name="Schmutz J."/>
            <person name="Larimer F."/>
            <person name="Land M."/>
            <person name="Hauser L."/>
            <person name="Challacombe J.F."/>
            <person name="Green L."/>
            <person name="Lindler L.E."/>
            <person name="Nikolich M.P."/>
            <person name="Richardson P."/>
        </authorList>
    </citation>
    <scope>NUCLEOTIDE SEQUENCE [LARGE SCALE GENOMIC DNA]</scope>
    <source>
        <strain>YPIII</strain>
    </source>
</reference>
<organism>
    <name type="scientific">Yersinia pseudotuberculosis serotype O:3 (strain YPIII)</name>
    <dbReference type="NCBI Taxonomy" id="502800"/>
    <lineage>
        <taxon>Bacteria</taxon>
        <taxon>Pseudomonadati</taxon>
        <taxon>Pseudomonadota</taxon>
        <taxon>Gammaproteobacteria</taxon>
        <taxon>Enterobacterales</taxon>
        <taxon>Yersiniaceae</taxon>
        <taxon>Yersinia</taxon>
    </lineage>
</organism>
<sequence>MQVRQSIHSDHAKQLDTAGLRREFLIEKIFAADDYTMTYSHIDRIIVGGILPVSKAVSIGNEVGKQLGVSYFLERRELGAINIGGPGLIVVDGQTYEIGNEEALYVGKGAKEVKFSSIDRANPAKFYYNSAPAHTTYPNKKITLAEASPQTLGDDATSNRRTINKYIVPDVLPTCQLSMGLTKLAPGSLWNTMPCHTHERRMEVYFYFDMDEETAVFHMMGQPQETRHLLVHNEQAVISPSWSIHSGVGTKRYTFIWGMVGENQVFGDMDHIAVSELR</sequence>
<keyword id="KW-0413">Isomerase</keyword>
<keyword id="KW-0479">Metal-binding</keyword>
<keyword id="KW-0862">Zinc</keyword>